<organism>
    <name type="scientific">Caenorhabditis elegans</name>
    <dbReference type="NCBI Taxonomy" id="6239"/>
    <lineage>
        <taxon>Eukaryota</taxon>
        <taxon>Metazoa</taxon>
        <taxon>Ecdysozoa</taxon>
        <taxon>Nematoda</taxon>
        <taxon>Chromadorea</taxon>
        <taxon>Rhabditida</taxon>
        <taxon>Rhabditina</taxon>
        <taxon>Rhabditomorpha</taxon>
        <taxon>Rhabditoidea</taxon>
        <taxon>Rhabditidae</taxon>
        <taxon>Peloderinae</taxon>
        <taxon>Caenorhabditis</taxon>
    </lineage>
</organism>
<accession>Q09276</accession>
<keyword id="KW-1003">Cell membrane</keyword>
<keyword id="KW-0966">Cell projection</keyword>
<keyword id="KW-1015">Disulfide bond</keyword>
<keyword id="KW-0472">Membrane</keyword>
<keyword id="KW-0524">Neurogenesis</keyword>
<keyword id="KW-1185">Reference proteome</keyword>
<keyword id="KW-0964">Secreted</keyword>
<keyword id="KW-0732">Signal</keyword>
<keyword id="KW-0812">Transmembrane</keyword>
<keyword id="KW-1133">Transmembrane helix</keyword>
<name>DYF7_CAEEL</name>
<protein>
    <recommendedName>
        <fullName evidence="7">Protein dyf-7</fullName>
    </recommendedName>
    <alternativeName>
        <fullName evidence="8">Abnormal dye filling protein 7</fullName>
    </alternativeName>
</protein>
<comment type="function">
    <text evidence="4 5 6">Required for permeability of amphid and phasmid neurons to external dyes, chemotaxis to ammonium chloride, avoidance of high osmotic stimuli, male mating and dauer formation (PubMed:7705621). Along with dex-1, enables neurite growth and maintenance by anchoring amphid dendritic tips during neuron cell body migration in embryonic and larval development (PubMed:19344940, PubMed:34115759).</text>
</comment>
<comment type="subunit">
    <text evidence="4">Monomer under reducing conditions. Homodimer under non-reducing conditions. May also form higher order oligomers.</text>
</comment>
<comment type="subcellular location">
    <subcellularLocation>
        <location evidence="4">Cell membrane</location>
        <topology evidence="2">Single-pass membrane protein</topology>
    </subcellularLocation>
    <subcellularLocation>
        <location evidence="4">Cell projection</location>
        <location evidence="4">Dendrite</location>
    </subcellularLocation>
    <subcellularLocation>
        <location evidence="4">Secreted</location>
    </subcellularLocation>
    <text evidence="4">Located at dendritic tips. Secreted following proteolytic cleavage in vitro.</text>
</comment>
<comment type="tissue specificity">
    <text evidence="4">In the embryo, expressed in the excretory cell and, during dendrite formation, in the non-neuronal cells surrounding the sensory neurons, including hypodermal cells.</text>
</comment>
<comment type="developmental stage">
    <text evidence="4">Expression is first apparent in bean-stage embryos, peaks in late embryogenesis, reduces in L1 larvae and is negligible in later larval stages and adults.</text>
</comment>
<comment type="PTM">
    <text evidence="4">Proteolytically cleaved and secreted in vitro.</text>
</comment>
<sequence length="446" mass="49954">MNQLWRASCLQVLITFLLIHQNKASEKDRFVELVDCIADSFTVVLNKSDPEVMRMISNPKSQPVVYVYGHKTRHPCGTSMKDEKGLTNFNLTIPYGSECDVTLTDLPKHRYAETTVVLEDNADLSFGKTTRLNHVFCLYTRNVKTIRFSDVSNGHEVIASTGGKPKPKVEMLFRSTDSGKTLQAARENEFVEFFIALSPDSAYHGISPKECTFSDREDISAPDAKKITFVQGGCPVNGMNDIIDPLANVNDQIYFSKFRTFRFGNQSTVFVHCQVQVCLKKDECSKTCYKKVSDSNLTAERLRFRHKRSITDLERRTTRSAPTDDNGSLDLTNSLTVVSRIESAELVASPISQPTIVDTPSEQRRDPCPKSSNMGFIPLIIMGSLASLLLFSAGAAIYFGCKLKSMKKKDSFDMMSAFSNPTVSMPVTYSHYQRSAYNASVDSLYR</sequence>
<dbReference type="EMBL" id="BX284606">
    <property type="protein sequence ID" value="CAA87330.2"/>
    <property type="molecule type" value="Genomic_DNA"/>
</dbReference>
<dbReference type="PIR" id="B89614">
    <property type="entry name" value="B89614"/>
</dbReference>
<dbReference type="PIR" id="T19902">
    <property type="entry name" value="T19902"/>
</dbReference>
<dbReference type="RefSeq" id="NP_001379066.1">
    <property type="nucleotide sequence ID" value="NM_001392826.1"/>
</dbReference>
<dbReference type="RefSeq" id="NP_509630.1">
    <property type="nucleotide sequence ID" value="NM_077229.4"/>
</dbReference>
<dbReference type="SMR" id="Q09276"/>
<dbReference type="BioGRID" id="46099">
    <property type="interactions" value="2"/>
</dbReference>
<dbReference type="FunCoup" id="Q09276">
    <property type="interactions" value="5"/>
</dbReference>
<dbReference type="STRING" id="6239.C43C3.3.1"/>
<dbReference type="PaxDb" id="6239-C43C3.3"/>
<dbReference type="PeptideAtlas" id="Q09276"/>
<dbReference type="EnsemblMetazoa" id="C43C3.3.1">
    <property type="protein sequence ID" value="C43C3.3.1"/>
    <property type="gene ID" value="WBGene00001123"/>
</dbReference>
<dbReference type="GeneID" id="181183"/>
<dbReference type="UCSC" id="C43C3.3">
    <property type="organism name" value="c. elegans"/>
</dbReference>
<dbReference type="AGR" id="WB:WBGene00001123"/>
<dbReference type="WormBase" id="C43C3.3">
    <property type="protein sequence ID" value="CE23591"/>
    <property type="gene ID" value="WBGene00001123"/>
    <property type="gene designation" value="dyf-7"/>
</dbReference>
<dbReference type="eggNOG" id="ENOG502S06H">
    <property type="taxonomic scope" value="Eukaryota"/>
</dbReference>
<dbReference type="HOGENOM" id="CLU_618620_0_0_1"/>
<dbReference type="InParanoid" id="Q09276"/>
<dbReference type="OMA" id="STVFAHC"/>
<dbReference type="OrthoDB" id="10040649at2759"/>
<dbReference type="PRO" id="PR:Q09276"/>
<dbReference type="Proteomes" id="UP000001940">
    <property type="component" value="Chromosome X"/>
</dbReference>
<dbReference type="Bgee" id="WBGene00001123">
    <property type="expression patterns" value="Expressed in pharyngeal muscle cell (C elegans) and 3 other cell types or tissues"/>
</dbReference>
<dbReference type="GO" id="GO:0032590">
    <property type="term" value="C:dendrite membrane"/>
    <property type="evidence" value="ECO:0000314"/>
    <property type="project" value="WormBase"/>
</dbReference>
<dbReference type="GO" id="GO:0005576">
    <property type="term" value="C:extracellular region"/>
    <property type="evidence" value="ECO:0007669"/>
    <property type="project" value="UniProtKB-SubCell"/>
</dbReference>
<dbReference type="GO" id="GO:0003391">
    <property type="term" value="P:amphid sensory organ dendrite retrograde extension"/>
    <property type="evidence" value="ECO:0000315"/>
    <property type="project" value="WormBase"/>
</dbReference>
<dbReference type="GO" id="GO:0009653">
    <property type="term" value="P:anatomical structure morphogenesis"/>
    <property type="evidence" value="ECO:0000318"/>
    <property type="project" value="GO_Central"/>
</dbReference>
<dbReference type="GO" id="GO:1990138">
    <property type="term" value="P:neuron projection extension"/>
    <property type="evidence" value="ECO:0000315"/>
    <property type="project" value="UniProtKB"/>
</dbReference>
<dbReference type="FunFam" id="2.60.40.4100:FF:000013">
    <property type="entry name" value="Protein dyf-7"/>
    <property type="match status" value="1"/>
</dbReference>
<dbReference type="Gene3D" id="2.60.40.4100">
    <property type="entry name" value="Zona pellucida, ZP-C domain"/>
    <property type="match status" value="1"/>
</dbReference>
<dbReference type="InterPro" id="IPR052774">
    <property type="entry name" value="Celegans_DevNeuronal_Protein"/>
</dbReference>
<dbReference type="InterPro" id="IPR055355">
    <property type="entry name" value="ZP-C"/>
</dbReference>
<dbReference type="InterPro" id="IPR042235">
    <property type="entry name" value="ZP-C_dom"/>
</dbReference>
<dbReference type="InterPro" id="IPR001507">
    <property type="entry name" value="ZP_dom"/>
</dbReference>
<dbReference type="PANTHER" id="PTHR47327">
    <property type="entry name" value="FI18240P1-RELATED"/>
    <property type="match status" value="1"/>
</dbReference>
<dbReference type="PANTHER" id="PTHR47327:SF20">
    <property type="entry name" value="PROTEIN DYF-7"/>
    <property type="match status" value="1"/>
</dbReference>
<dbReference type="Pfam" id="PF00100">
    <property type="entry name" value="Zona_pellucida"/>
    <property type="match status" value="1"/>
</dbReference>
<dbReference type="SMART" id="SM00241">
    <property type="entry name" value="ZP"/>
    <property type="match status" value="1"/>
</dbReference>
<dbReference type="PROSITE" id="PS51034">
    <property type="entry name" value="ZP_2"/>
    <property type="match status" value="1"/>
</dbReference>
<gene>
    <name evidence="8" type="primary">dyf-7</name>
    <name evidence="8" type="ORF">C43C3.3</name>
</gene>
<evidence type="ECO:0000250" key="1"/>
<evidence type="ECO:0000255" key="2"/>
<evidence type="ECO:0000255" key="3">
    <source>
        <dbReference type="PROSITE-ProRule" id="PRU00375"/>
    </source>
</evidence>
<evidence type="ECO:0000269" key="4">
    <source>
    </source>
</evidence>
<evidence type="ECO:0000269" key="5">
    <source>
    </source>
</evidence>
<evidence type="ECO:0000269" key="6">
    <source>
    </source>
</evidence>
<evidence type="ECO:0000305" key="7"/>
<evidence type="ECO:0000312" key="8">
    <source>
        <dbReference type="WormBase" id="C43C3.3"/>
    </source>
</evidence>
<proteinExistence type="evidence at protein level"/>
<reference key="1">
    <citation type="journal article" date="1998" name="Science">
        <title>Genome sequence of the nematode C. elegans: a platform for investigating biology.</title>
        <authorList>
            <consortium name="The C. elegans sequencing consortium"/>
        </authorList>
    </citation>
    <scope>NUCLEOTIDE SEQUENCE [LARGE SCALE GENOMIC DNA]</scope>
    <source>
        <strain>Bristol N2</strain>
    </source>
</reference>
<reference key="2">
    <citation type="journal article" date="1995" name="Genetics">
        <title>Mutations affecting the chemosensory neurons of Caenorhabditis elegans.</title>
        <authorList>
            <person name="Starich T.A."/>
            <person name="Herman R.K."/>
            <person name="Kari C.K."/>
            <person name="Yeh W.H."/>
            <person name="Schackwitz W.S."/>
            <person name="Schuyler M.W."/>
            <person name="Collet J."/>
            <person name="Thomas J.H."/>
            <person name="Riddle D.L."/>
        </authorList>
    </citation>
    <scope>GENE NAME</scope>
    <scope>FUNCTION</scope>
</reference>
<reference key="3">
    <citation type="journal article" date="2009" name="Cell">
        <title>DEX-1 and DYF-7 establish sensory dendrite length by anchoring dendritic tips during cell migration.</title>
        <authorList>
            <person name="Heiman M.G."/>
            <person name="Shaham S."/>
        </authorList>
    </citation>
    <scope>FUNCTION</scope>
    <scope>SUBUNIT</scope>
    <scope>SUBCELLULAR LOCATION</scope>
    <scope>TISSUE SPECIFICITY</scope>
    <scope>DEVELOPMENTAL STAGE</scope>
    <scope>MUTAGENESIS OF VAL-52; PRO-107; VAL-191; GLU-217 AND GLY-394</scope>
</reference>
<reference key="4">
    <citation type="journal article" date="2021" name="PLoS Genet.">
        <title>DYF-4 regulates patched-related/DAF-6-mediated sensory compartment formation in C. elegans.</title>
        <authorList>
            <person name="Hong H."/>
            <person name="Chen H."/>
            <person name="Zhang Y."/>
            <person name="Wu Z."/>
            <person name="Zhang Y."/>
            <person name="Zhang Y."/>
            <person name="Hu Z."/>
            <person name="Zhang J.V."/>
            <person name="Ling K."/>
            <person name="Hu J."/>
            <person name="Wei Q."/>
        </authorList>
    </citation>
    <scope>FUNCTION</scope>
    <scope>MUTAGENESIS OF PRO-107</scope>
</reference>
<feature type="signal peptide" evidence="2">
    <location>
        <begin position="1"/>
        <end position="24"/>
    </location>
</feature>
<feature type="chain" id="PRO_0000067427" description="Protein dyf-7" evidence="7">
    <location>
        <begin position="25"/>
        <end position="446"/>
    </location>
</feature>
<feature type="transmembrane region" description="Helical" evidence="2">
    <location>
        <begin position="377"/>
        <end position="397"/>
    </location>
</feature>
<feature type="domain" description="ZP" evidence="3">
    <location>
        <begin position="35"/>
        <end position="295"/>
    </location>
</feature>
<feature type="disulfide bond" evidence="1">
    <location>
        <begin position="211"/>
        <end position="273"/>
    </location>
</feature>
<feature type="mutagenesis site" description="In ns120; results in defective neurite extension." evidence="4">
    <original>V</original>
    <variation>E</variation>
    <location>
        <position position="52"/>
    </location>
</feature>
<feature type="mutagenesis site" description="In ns117; results in defective neurite extension. The dendrite extension defect is suppressed in a wsp-1 gm324 mutant background." evidence="4 5">
    <original>P</original>
    <variation>S</variation>
    <location>
        <position position="107"/>
    </location>
</feature>
<feature type="mutagenesis site" description="In ns116; results in defective neurite extension." evidence="4">
    <original>V</original>
    <variation>D</variation>
    <location>
        <position position="191"/>
    </location>
</feature>
<feature type="mutagenesis site" description="In ns88; results in defective neurite extension." evidence="4">
    <original>E</original>
    <variation>K</variation>
    <location>
        <position position="217"/>
    </location>
</feature>
<feature type="mutagenesis site" description="In ns118; results in defective neurite extension." evidence="4">
    <original>G</original>
    <variation>D</variation>
    <location>
        <position position="394"/>
    </location>
</feature>